<dbReference type="EMBL" id="U00089">
    <property type="protein sequence ID" value="AAB96074.1"/>
    <property type="molecule type" value="Genomic_DNA"/>
</dbReference>
<dbReference type="PIR" id="S73752">
    <property type="entry name" value="S73752"/>
</dbReference>
<dbReference type="RefSeq" id="NP_110102.1">
    <property type="nucleotide sequence ID" value="NC_000912.1"/>
</dbReference>
<dbReference type="RefSeq" id="WP_010874770.1">
    <property type="nucleotide sequence ID" value="NC_000912.1"/>
</dbReference>
<dbReference type="SMR" id="P75372"/>
<dbReference type="STRING" id="272634.MPN_414"/>
<dbReference type="EnsemblBacteria" id="AAB96074">
    <property type="protein sequence ID" value="AAB96074"/>
    <property type="gene ID" value="MPN_414"/>
</dbReference>
<dbReference type="KEGG" id="mpn:MPN_414"/>
<dbReference type="PATRIC" id="fig|272634.6.peg.449"/>
<dbReference type="HOGENOM" id="CLU_054937_0_0_14"/>
<dbReference type="OrthoDB" id="403469at2"/>
<dbReference type="BioCyc" id="MPNE272634:G1GJ3-671-MONOMER"/>
<dbReference type="Proteomes" id="UP000000808">
    <property type="component" value="Chromosome"/>
</dbReference>
<dbReference type="InterPro" id="IPR007885">
    <property type="entry name" value="MgpC"/>
</dbReference>
<dbReference type="Pfam" id="PF05220">
    <property type="entry name" value="MgpC"/>
    <property type="match status" value="1"/>
</dbReference>
<organism>
    <name type="scientific">Mycoplasma pneumoniae (strain ATCC 29342 / M129 / Subtype 1)</name>
    <name type="common">Mycoplasmoides pneumoniae</name>
    <dbReference type="NCBI Taxonomy" id="272634"/>
    <lineage>
        <taxon>Bacteria</taxon>
        <taxon>Bacillati</taxon>
        <taxon>Mycoplasmatota</taxon>
        <taxon>Mycoplasmoidales</taxon>
        <taxon>Mycoplasmoidaceae</taxon>
        <taxon>Mycoplasmoides</taxon>
    </lineage>
</organism>
<proteinExistence type="uncertain"/>
<evidence type="ECO:0000256" key="1">
    <source>
        <dbReference type="SAM" id="MobiDB-lite"/>
    </source>
</evidence>
<evidence type="ECO:0000305" key="2"/>
<sequence length="493" mass="52836">MKPTSLPKNFTNNPAPKAVTGFKLDNGRAYRKLNEAWPVYEPLDSTKDGKGKDKDGWTTSGASEPKGDAPLVSSTGSQMSAVTDSQQSGHNSGLVSLAQRSTTVAVQKSDSSGFQGQGTTDNKFQKYLNTAQALHQMGVIVPSLETWPGKPSTGIATRAGGGVSVQAATRQSSSTNEDLPNVITQLYHTSTSQLAYLNGQIVVMGSNAVPSLWYWVVDERTTSGSATWWAKTHLNFGTEVQKSFVENQLGFKDDSNSDSKNSNLKAQDLTQPAYLITGLDVVQDHLVFAAFKAGAVGYDMTTDSNASTKDQALAWSTTAGLDSAGGYNNLVENTAGLNGPINDLFTLLDTFAYVTPVSGMKGGSQNNEEVQTKYPVKDDSKASAKIASLINASPLNSYGDDGVTVFDALGLNFNFKLDEARLPSRTDQLLVYGIVNESELKSARENAQSTSDDNSNTKVKWTKPPRTTSPCRITTVPISPKRVTEEERSSGNH</sequence>
<keyword id="KW-1185">Reference proteome</keyword>
<accession>P75372</accession>
<protein>
    <recommendedName>
        <fullName>Putative MgpC-like protein MPN_414</fullName>
    </recommendedName>
</protein>
<name>Y414_MYCPN</name>
<gene>
    <name type="ordered locus">MPN_414</name>
    <name type="ORF">A05_orf493</name>
    <name type="ORF">MP426</name>
</gene>
<reference key="1">
    <citation type="journal article" date="1996" name="Nucleic Acids Res.">
        <title>Complete sequence analysis of the genome of the bacterium Mycoplasma pneumoniae.</title>
        <authorList>
            <person name="Himmelreich R."/>
            <person name="Hilbert H."/>
            <person name="Plagens H."/>
            <person name="Pirkl E."/>
            <person name="Li B.-C."/>
            <person name="Herrmann R."/>
        </authorList>
    </citation>
    <scope>NUCLEOTIDE SEQUENCE [LARGE SCALE GENOMIC DNA]</scope>
    <source>
        <strain>ATCC 29342 / M129 / Subtype 1</strain>
    </source>
</reference>
<feature type="chain" id="PRO_0000210724" description="Putative MgpC-like protein MPN_414">
    <location>
        <begin position="1"/>
        <end position="493"/>
    </location>
</feature>
<feature type="region of interest" description="Disordered" evidence="1">
    <location>
        <begin position="1"/>
        <end position="92"/>
    </location>
</feature>
<feature type="region of interest" description="Disordered" evidence="1">
    <location>
        <begin position="441"/>
        <end position="493"/>
    </location>
</feature>
<feature type="compositionally biased region" description="Polar residues" evidence="1">
    <location>
        <begin position="1"/>
        <end position="14"/>
    </location>
</feature>
<feature type="compositionally biased region" description="Basic and acidic residues" evidence="1">
    <location>
        <begin position="25"/>
        <end position="34"/>
    </location>
</feature>
<feature type="compositionally biased region" description="Basic and acidic residues" evidence="1">
    <location>
        <begin position="44"/>
        <end position="56"/>
    </location>
</feature>
<feature type="compositionally biased region" description="Polar residues" evidence="1">
    <location>
        <begin position="72"/>
        <end position="92"/>
    </location>
</feature>
<feature type="compositionally biased region" description="Polar residues" evidence="1">
    <location>
        <begin position="445"/>
        <end position="472"/>
    </location>
</feature>
<feature type="compositionally biased region" description="Basic and acidic residues" evidence="1">
    <location>
        <begin position="482"/>
        <end position="493"/>
    </location>
</feature>
<comment type="similarity">
    <text evidence="2">Belongs to the MgpC family.</text>
</comment>
<comment type="caution">
    <text evidence="2">Could be the product of a pseudogene.</text>
</comment>